<dbReference type="EMBL" id="DQ898156">
    <property type="protein sequence ID" value="ABI32451.1"/>
    <property type="molecule type" value="Genomic_DNA"/>
</dbReference>
<dbReference type="RefSeq" id="YP_740145.1">
    <property type="nucleotide sequence ID" value="NC_008325.1"/>
</dbReference>
<dbReference type="SMR" id="Q0G9T4"/>
<dbReference type="GeneID" id="4266772"/>
<dbReference type="GO" id="GO:0009535">
    <property type="term" value="C:chloroplast thylakoid membrane"/>
    <property type="evidence" value="ECO:0007669"/>
    <property type="project" value="UniProtKB-SubCell"/>
</dbReference>
<dbReference type="GO" id="GO:0015979">
    <property type="term" value="P:photosynthesis"/>
    <property type="evidence" value="ECO:0007669"/>
    <property type="project" value="InterPro"/>
</dbReference>
<dbReference type="HAMAP" id="MF_00293">
    <property type="entry name" value="PSII_PsbN"/>
    <property type="match status" value="1"/>
</dbReference>
<dbReference type="InterPro" id="IPR003398">
    <property type="entry name" value="PSII_PsbN"/>
</dbReference>
<dbReference type="PANTHER" id="PTHR35326">
    <property type="entry name" value="PROTEIN PSBN"/>
    <property type="match status" value="1"/>
</dbReference>
<dbReference type="PANTHER" id="PTHR35326:SF3">
    <property type="entry name" value="PROTEIN PSBN"/>
    <property type="match status" value="1"/>
</dbReference>
<dbReference type="Pfam" id="PF02468">
    <property type="entry name" value="PsbN"/>
    <property type="match status" value="1"/>
</dbReference>
<comment type="function">
    <text evidence="1">May play a role in photosystem I and II biogenesis.</text>
</comment>
<comment type="subcellular location">
    <subcellularLocation>
        <location evidence="1">Plastid</location>
        <location evidence="1">Chloroplast thylakoid membrane</location>
        <topology evidence="1">Single-pass membrane protein</topology>
    </subcellularLocation>
</comment>
<comment type="similarity">
    <text evidence="1">Belongs to the PsbN family.</text>
</comment>
<comment type="caution">
    <text evidence="1">Originally thought to be a component of PSII; based on experiments in Synechocystis, N.tabacum and barley, and its absence from PSII in T.elongatus and T.vulcanus, this is probably not true.</text>
</comment>
<proteinExistence type="inferred from homology"/>
<organism>
    <name type="scientific">Daucus carota</name>
    <name type="common">Wild carrot</name>
    <dbReference type="NCBI Taxonomy" id="4039"/>
    <lineage>
        <taxon>Eukaryota</taxon>
        <taxon>Viridiplantae</taxon>
        <taxon>Streptophyta</taxon>
        <taxon>Embryophyta</taxon>
        <taxon>Tracheophyta</taxon>
        <taxon>Spermatophyta</taxon>
        <taxon>Magnoliopsida</taxon>
        <taxon>eudicotyledons</taxon>
        <taxon>Gunneridae</taxon>
        <taxon>Pentapetalae</taxon>
        <taxon>asterids</taxon>
        <taxon>campanulids</taxon>
        <taxon>Apiales</taxon>
        <taxon>Apiaceae</taxon>
        <taxon>Apioideae</taxon>
        <taxon>Scandiceae</taxon>
        <taxon>Daucinae</taxon>
        <taxon>Daucus</taxon>
        <taxon>Daucus sect. Daucus</taxon>
    </lineage>
</organism>
<reference key="1">
    <citation type="journal article" date="2006" name="BMC Genomics">
        <title>Complete plastid genome sequence of Daucus carota: implications for biotechnology and phylogeny of angiosperms.</title>
        <authorList>
            <person name="Ruhlman T."/>
            <person name="Lee S.-B."/>
            <person name="Jansen R.K."/>
            <person name="Hostetler J.B."/>
            <person name="Tallon L.J."/>
            <person name="Town C.D."/>
            <person name="Daniell H."/>
        </authorList>
    </citation>
    <scope>NUCLEOTIDE SEQUENCE [LARGE SCALE GENOMIC DNA]</scope>
    <source>
        <strain>cv. Danvers Half-long</strain>
    </source>
</reference>
<accession>Q0G9T4</accession>
<protein>
    <recommendedName>
        <fullName evidence="1">Protein PsbN</fullName>
    </recommendedName>
</protein>
<name>PSBN_DAUCA</name>
<geneLocation type="chloroplast"/>
<keyword id="KW-0150">Chloroplast</keyword>
<keyword id="KW-0472">Membrane</keyword>
<keyword id="KW-0934">Plastid</keyword>
<keyword id="KW-0793">Thylakoid</keyword>
<keyword id="KW-0812">Transmembrane</keyword>
<keyword id="KW-1133">Transmembrane helix</keyword>
<feature type="chain" id="PRO_0000276267" description="Protein PsbN">
    <location>
        <begin position="1"/>
        <end position="43"/>
    </location>
</feature>
<feature type="transmembrane region" description="Helical" evidence="1">
    <location>
        <begin position="7"/>
        <end position="27"/>
    </location>
</feature>
<sequence>METATLVAIFISGLLVSFTGYALYTAFGQPSQQLRDPFEEHGD</sequence>
<gene>
    <name evidence="1" type="primary">psbN</name>
</gene>
<evidence type="ECO:0000255" key="1">
    <source>
        <dbReference type="HAMAP-Rule" id="MF_00293"/>
    </source>
</evidence>